<accession>Q9LGI2</accession>
<accession>A0A0P0UYT2</accession>
<accession>Q0JQM0</accession>
<feature type="initiator methionine" description="Removed" evidence="1">
    <location>
        <position position="1"/>
    </location>
</feature>
<feature type="chain" id="PRO_0000294195" description="Histone H2B.10">
    <location>
        <begin position="2"/>
        <end position="153"/>
    </location>
</feature>
<feature type="region of interest" description="Disordered" evidence="2">
    <location>
        <begin position="1"/>
        <end position="61"/>
    </location>
</feature>
<feature type="compositionally biased region" description="Basic and acidic residues" evidence="2">
    <location>
        <begin position="1"/>
        <end position="28"/>
    </location>
</feature>
<feature type="compositionally biased region" description="Basic and acidic residues" evidence="2">
    <location>
        <begin position="36"/>
        <end position="53"/>
    </location>
</feature>
<feature type="modified residue" description="N6-acetyllysine" evidence="1">
    <location>
        <position position="7"/>
    </location>
</feature>
<feature type="modified residue" description="N6-acetyllysine" evidence="1">
    <location>
        <position position="37"/>
    </location>
</feature>
<feature type="cross-link" description="Glycyl lysine isopeptide (Lys-Gly) (interchain with G-Cter in ubiquitin)" evidence="1">
    <location>
        <position position="149"/>
    </location>
</feature>
<name>H2B10_ORYSJ</name>
<dbReference type="EMBL" id="AP002522">
    <property type="protein sequence ID" value="BAB03624.1"/>
    <property type="molecule type" value="Genomic_DNA"/>
</dbReference>
<dbReference type="EMBL" id="AP003045">
    <property type="protein sequence ID" value="BAB44045.1"/>
    <property type="molecule type" value="Genomic_DNA"/>
</dbReference>
<dbReference type="EMBL" id="AP008207">
    <property type="protein sequence ID" value="BAF03958.2"/>
    <property type="molecule type" value="Genomic_DNA"/>
</dbReference>
<dbReference type="EMBL" id="AP014957">
    <property type="protein sequence ID" value="BAS70438.1"/>
    <property type="molecule type" value="Genomic_DNA"/>
</dbReference>
<dbReference type="EMBL" id="CM000138">
    <property type="protein sequence ID" value="EAZ10572.1"/>
    <property type="molecule type" value="Genomic_DNA"/>
</dbReference>
<dbReference type="RefSeq" id="XP_015622397.1">
    <property type="nucleotide sequence ID" value="XM_015766911.1"/>
</dbReference>
<dbReference type="SMR" id="Q9LGI2"/>
<dbReference type="FunCoup" id="Q9LGI2">
    <property type="interactions" value="1794"/>
</dbReference>
<dbReference type="STRING" id="39947.Q9LGI2"/>
<dbReference type="PaxDb" id="39947-Q9LGI2"/>
<dbReference type="EnsemblPlants" id="Os01t0152300-00">
    <property type="protein sequence ID" value="Os01t0152300-00"/>
    <property type="gene ID" value="Os01g0152300"/>
</dbReference>
<dbReference type="Gramene" id="Os01t0152300-00">
    <property type="protein sequence ID" value="Os01t0152300-00"/>
    <property type="gene ID" value="Os01g0152300"/>
</dbReference>
<dbReference type="KEGG" id="dosa:Os01g0152300"/>
<dbReference type="eggNOG" id="KOG1744">
    <property type="taxonomic scope" value="Eukaryota"/>
</dbReference>
<dbReference type="HOGENOM" id="CLU_075666_1_0_1"/>
<dbReference type="InParanoid" id="Q9LGI2"/>
<dbReference type="OMA" id="RSKENWH"/>
<dbReference type="OrthoDB" id="1914959at2759"/>
<dbReference type="Proteomes" id="UP000000763">
    <property type="component" value="Chromosome 1"/>
</dbReference>
<dbReference type="Proteomes" id="UP000007752">
    <property type="component" value="Chromosome 1"/>
</dbReference>
<dbReference type="Proteomes" id="UP000059680">
    <property type="component" value="Chromosome 1"/>
</dbReference>
<dbReference type="GO" id="GO:0000786">
    <property type="term" value="C:nucleosome"/>
    <property type="evidence" value="ECO:0007669"/>
    <property type="project" value="UniProtKB-KW"/>
</dbReference>
<dbReference type="GO" id="GO:0005634">
    <property type="term" value="C:nucleus"/>
    <property type="evidence" value="ECO:0007669"/>
    <property type="project" value="UniProtKB-SubCell"/>
</dbReference>
<dbReference type="GO" id="GO:0003677">
    <property type="term" value="F:DNA binding"/>
    <property type="evidence" value="ECO:0000318"/>
    <property type="project" value="GO_Central"/>
</dbReference>
<dbReference type="GO" id="GO:0046982">
    <property type="term" value="F:protein heterodimerization activity"/>
    <property type="evidence" value="ECO:0007669"/>
    <property type="project" value="InterPro"/>
</dbReference>
<dbReference type="GO" id="GO:0030527">
    <property type="term" value="F:structural constituent of chromatin"/>
    <property type="evidence" value="ECO:0007669"/>
    <property type="project" value="InterPro"/>
</dbReference>
<dbReference type="CDD" id="cd22910">
    <property type="entry name" value="HFD_H2B"/>
    <property type="match status" value="1"/>
</dbReference>
<dbReference type="FunFam" id="1.10.20.10:FF:000014">
    <property type="entry name" value="Histone H2B"/>
    <property type="match status" value="1"/>
</dbReference>
<dbReference type="Gene3D" id="1.10.20.10">
    <property type="entry name" value="Histone, subunit A"/>
    <property type="match status" value="1"/>
</dbReference>
<dbReference type="InterPro" id="IPR009072">
    <property type="entry name" value="Histone-fold"/>
</dbReference>
<dbReference type="InterPro" id="IPR007125">
    <property type="entry name" value="Histone_H2A/H2B/H3"/>
</dbReference>
<dbReference type="InterPro" id="IPR000558">
    <property type="entry name" value="Histone_H2B"/>
</dbReference>
<dbReference type="InterPro" id="IPR055333">
    <property type="entry name" value="HISTONE_H2B_site"/>
</dbReference>
<dbReference type="PANTHER" id="PTHR23428">
    <property type="entry name" value="HISTONE H2B"/>
    <property type="match status" value="1"/>
</dbReference>
<dbReference type="Pfam" id="PF00125">
    <property type="entry name" value="Histone"/>
    <property type="match status" value="1"/>
</dbReference>
<dbReference type="PRINTS" id="PR00621">
    <property type="entry name" value="HISTONEH2B"/>
</dbReference>
<dbReference type="SMART" id="SM00427">
    <property type="entry name" value="H2B"/>
    <property type="match status" value="1"/>
</dbReference>
<dbReference type="SUPFAM" id="SSF47113">
    <property type="entry name" value="Histone-fold"/>
    <property type="match status" value="1"/>
</dbReference>
<dbReference type="PROSITE" id="PS00357">
    <property type="entry name" value="HISTONE_H2B"/>
    <property type="match status" value="1"/>
</dbReference>
<evidence type="ECO:0000250" key="1"/>
<evidence type="ECO:0000256" key="2">
    <source>
        <dbReference type="SAM" id="MobiDB-lite"/>
    </source>
</evidence>
<evidence type="ECO:0000305" key="3"/>
<organism>
    <name type="scientific">Oryza sativa subsp. japonica</name>
    <name type="common">Rice</name>
    <dbReference type="NCBI Taxonomy" id="39947"/>
    <lineage>
        <taxon>Eukaryota</taxon>
        <taxon>Viridiplantae</taxon>
        <taxon>Streptophyta</taxon>
        <taxon>Embryophyta</taxon>
        <taxon>Tracheophyta</taxon>
        <taxon>Spermatophyta</taxon>
        <taxon>Magnoliopsida</taxon>
        <taxon>Liliopsida</taxon>
        <taxon>Poales</taxon>
        <taxon>Poaceae</taxon>
        <taxon>BOP clade</taxon>
        <taxon>Oryzoideae</taxon>
        <taxon>Oryzeae</taxon>
        <taxon>Oryzinae</taxon>
        <taxon>Oryza</taxon>
        <taxon>Oryza sativa</taxon>
    </lineage>
</organism>
<sequence>MAPKAEKKPAAKKPAEEEPAAEKAEKALAGKKPKAEKRLPAGKAEKSSGEGKKAGRKKAKKSVETYKIYIFKVLKQVHPDIGISSKAMSIMNSFINDIFEKLAGESAKLARYNKKPTITSREIQTSVRLVLPGELAKHAVSEGTKAVTKFTSA</sequence>
<keyword id="KW-0007">Acetylation</keyword>
<keyword id="KW-0158">Chromosome</keyword>
<keyword id="KW-0238">DNA-binding</keyword>
<keyword id="KW-1017">Isopeptide bond</keyword>
<keyword id="KW-0544">Nucleosome core</keyword>
<keyword id="KW-0539">Nucleus</keyword>
<keyword id="KW-1185">Reference proteome</keyword>
<keyword id="KW-0832">Ubl conjugation</keyword>
<reference key="1">
    <citation type="journal article" date="2002" name="Nature">
        <title>The genome sequence and structure of rice chromosome 1.</title>
        <authorList>
            <person name="Sasaki T."/>
            <person name="Matsumoto T."/>
            <person name="Yamamoto K."/>
            <person name="Sakata K."/>
            <person name="Baba T."/>
            <person name="Katayose Y."/>
            <person name="Wu J."/>
            <person name="Niimura Y."/>
            <person name="Cheng Z."/>
            <person name="Nagamura Y."/>
            <person name="Antonio B.A."/>
            <person name="Kanamori H."/>
            <person name="Hosokawa S."/>
            <person name="Masukawa M."/>
            <person name="Arikawa K."/>
            <person name="Chiden Y."/>
            <person name="Hayashi M."/>
            <person name="Okamoto M."/>
            <person name="Ando T."/>
            <person name="Aoki H."/>
            <person name="Arita K."/>
            <person name="Hamada M."/>
            <person name="Harada C."/>
            <person name="Hijishita S."/>
            <person name="Honda M."/>
            <person name="Ichikawa Y."/>
            <person name="Idonuma A."/>
            <person name="Iijima M."/>
            <person name="Ikeda M."/>
            <person name="Ikeno M."/>
            <person name="Ito S."/>
            <person name="Ito T."/>
            <person name="Ito Y."/>
            <person name="Ito Y."/>
            <person name="Iwabuchi A."/>
            <person name="Kamiya K."/>
            <person name="Karasawa W."/>
            <person name="Katagiri S."/>
            <person name="Kikuta A."/>
            <person name="Kobayashi N."/>
            <person name="Kono I."/>
            <person name="Machita K."/>
            <person name="Maehara T."/>
            <person name="Mizuno H."/>
            <person name="Mizubayashi T."/>
            <person name="Mukai Y."/>
            <person name="Nagasaki H."/>
            <person name="Nakashima M."/>
            <person name="Nakama Y."/>
            <person name="Nakamichi Y."/>
            <person name="Nakamura M."/>
            <person name="Namiki N."/>
            <person name="Negishi M."/>
            <person name="Ohta I."/>
            <person name="Ono N."/>
            <person name="Saji S."/>
            <person name="Sakai K."/>
            <person name="Shibata M."/>
            <person name="Shimokawa T."/>
            <person name="Shomura A."/>
            <person name="Song J."/>
            <person name="Takazaki Y."/>
            <person name="Terasawa K."/>
            <person name="Tsuji K."/>
            <person name="Waki K."/>
            <person name="Yamagata H."/>
            <person name="Yamane H."/>
            <person name="Yoshiki S."/>
            <person name="Yoshihara R."/>
            <person name="Yukawa K."/>
            <person name="Zhong H."/>
            <person name="Iwama H."/>
            <person name="Endo T."/>
            <person name="Ito H."/>
            <person name="Hahn J.H."/>
            <person name="Kim H.-I."/>
            <person name="Eun M.-Y."/>
            <person name="Yano M."/>
            <person name="Jiang J."/>
            <person name="Gojobori T."/>
        </authorList>
    </citation>
    <scope>NUCLEOTIDE SEQUENCE [LARGE SCALE GENOMIC DNA]</scope>
    <source>
        <strain>cv. Nipponbare</strain>
    </source>
</reference>
<reference key="2">
    <citation type="journal article" date="2005" name="Nature">
        <title>The map-based sequence of the rice genome.</title>
        <authorList>
            <consortium name="International rice genome sequencing project (IRGSP)"/>
        </authorList>
    </citation>
    <scope>NUCLEOTIDE SEQUENCE [LARGE SCALE GENOMIC DNA]</scope>
    <source>
        <strain>cv. Nipponbare</strain>
    </source>
</reference>
<reference key="3">
    <citation type="journal article" date="2008" name="Nucleic Acids Res.">
        <title>The rice annotation project database (RAP-DB): 2008 update.</title>
        <authorList>
            <consortium name="The rice annotation project (RAP)"/>
        </authorList>
    </citation>
    <scope>GENOME REANNOTATION</scope>
    <source>
        <strain>cv. Nipponbare</strain>
    </source>
</reference>
<reference key="4">
    <citation type="journal article" date="2013" name="Rice">
        <title>Improvement of the Oryza sativa Nipponbare reference genome using next generation sequence and optical map data.</title>
        <authorList>
            <person name="Kawahara Y."/>
            <person name="de la Bastide M."/>
            <person name="Hamilton J.P."/>
            <person name="Kanamori H."/>
            <person name="McCombie W.R."/>
            <person name="Ouyang S."/>
            <person name="Schwartz D.C."/>
            <person name="Tanaka T."/>
            <person name="Wu J."/>
            <person name="Zhou S."/>
            <person name="Childs K.L."/>
            <person name="Davidson R.M."/>
            <person name="Lin H."/>
            <person name="Quesada-Ocampo L."/>
            <person name="Vaillancourt B."/>
            <person name="Sakai H."/>
            <person name="Lee S.S."/>
            <person name="Kim J."/>
            <person name="Numa H."/>
            <person name="Itoh T."/>
            <person name="Buell C.R."/>
            <person name="Matsumoto T."/>
        </authorList>
    </citation>
    <scope>GENOME REANNOTATION</scope>
    <source>
        <strain>cv. Nipponbare</strain>
    </source>
</reference>
<reference key="5">
    <citation type="journal article" date="2005" name="PLoS Biol.">
        <title>The genomes of Oryza sativa: a history of duplications.</title>
        <authorList>
            <person name="Yu J."/>
            <person name="Wang J."/>
            <person name="Lin W."/>
            <person name="Li S."/>
            <person name="Li H."/>
            <person name="Zhou J."/>
            <person name="Ni P."/>
            <person name="Dong W."/>
            <person name="Hu S."/>
            <person name="Zeng C."/>
            <person name="Zhang J."/>
            <person name="Zhang Y."/>
            <person name="Li R."/>
            <person name="Xu Z."/>
            <person name="Li S."/>
            <person name="Li X."/>
            <person name="Zheng H."/>
            <person name="Cong L."/>
            <person name="Lin L."/>
            <person name="Yin J."/>
            <person name="Geng J."/>
            <person name="Li G."/>
            <person name="Shi J."/>
            <person name="Liu J."/>
            <person name="Lv H."/>
            <person name="Li J."/>
            <person name="Wang J."/>
            <person name="Deng Y."/>
            <person name="Ran L."/>
            <person name="Shi X."/>
            <person name="Wang X."/>
            <person name="Wu Q."/>
            <person name="Li C."/>
            <person name="Ren X."/>
            <person name="Wang J."/>
            <person name="Wang X."/>
            <person name="Li D."/>
            <person name="Liu D."/>
            <person name="Zhang X."/>
            <person name="Ji Z."/>
            <person name="Zhao W."/>
            <person name="Sun Y."/>
            <person name="Zhang Z."/>
            <person name="Bao J."/>
            <person name="Han Y."/>
            <person name="Dong L."/>
            <person name="Ji J."/>
            <person name="Chen P."/>
            <person name="Wu S."/>
            <person name="Liu J."/>
            <person name="Xiao Y."/>
            <person name="Bu D."/>
            <person name="Tan J."/>
            <person name="Yang L."/>
            <person name="Ye C."/>
            <person name="Zhang J."/>
            <person name="Xu J."/>
            <person name="Zhou Y."/>
            <person name="Yu Y."/>
            <person name="Zhang B."/>
            <person name="Zhuang S."/>
            <person name="Wei H."/>
            <person name="Liu B."/>
            <person name="Lei M."/>
            <person name="Yu H."/>
            <person name="Li Y."/>
            <person name="Xu H."/>
            <person name="Wei S."/>
            <person name="He X."/>
            <person name="Fang L."/>
            <person name="Zhang Z."/>
            <person name="Zhang Y."/>
            <person name="Huang X."/>
            <person name="Su Z."/>
            <person name="Tong W."/>
            <person name="Li J."/>
            <person name="Tong Z."/>
            <person name="Li S."/>
            <person name="Ye J."/>
            <person name="Wang L."/>
            <person name="Fang L."/>
            <person name="Lei T."/>
            <person name="Chen C.-S."/>
            <person name="Chen H.-C."/>
            <person name="Xu Z."/>
            <person name="Li H."/>
            <person name="Huang H."/>
            <person name="Zhang F."/>
            <person name="Xu H."/>
            <person name="Li N."/>
            <person name="Zhao C."/>
            <person name="Li S."/>
            <person name="Dong L."/>
            <person name="Huang Y."/>
            <person name="Li L."/>
            <person name="Xi Y."/>
            <person name="Qi Q."/>
            <person name="Li W."/>
            <person name="Zhang B."/>
            <person name="Hu W."/>
            <person name="Zhang Y."/>
            <person name="Tian X."/>
            <person name="Jiao Y."/>
            <person name="Liang X."/>
            <person name="Jin J."/>
            <person name="Gao L."/>
            <person name="Zheng W."/>
            <person name="Hao B."/>
            <person name="Liu S.-M."/>
            <person name="Wang W."/>
            <person name="Yuan L."/>
            <person name="Cao M."/>
            <person name="McDermott J."/>
            <person name="Samudrala R."/>
            <person name="Wang J."/>
            <person name="Wong G.K.-S."/>
            <person name="Yang H."/>
        </authorList>
    </citation>
    <scope>NUCLEOTIDE SEQUENCE [LARGE SCALE GENOMIC DNA]</scope>
    <source>
        <strain>cv. Nipponbare</strain>
    </source>
</reference>
<proteinExistence type="inferred from homology"/>
<protein>
    <recommendedName>
        <fullName>Histone H2B.10</fullName>
    </recommendedName>
</protein>
<comment type="function">
    <text>Core component of nucleosome. Nucleosomes wrap and compact DNA into chromatin, limiting DNA accessibility to the cellular machineries which require DNA as a template. Histones thereby play a central role in transcription regulation, DNA repair, DNA replication and chromosomal stability. DNA accessibility is regulated via a complex set of post-translational modifications of histones, also called histone code, and nucleosome remodeling.</text>
</comment>
<comment type="subunit">
    <text>The nucleosome is a histone octamer containing two molecules each of H2A, H2B, H3 and H4 assembled in one H3-H4 heterotetramer and two H2A-H2B heterodimers. The octamer wraps approximately 147 bp of DNA.</text>
</comment>
<comment type="subcellular location">
    <subcellularLocation>
        <location evidence="1">Nucleus</location>
    </subcellularLocation>
    <subcellularLocation>
        <location evidence="1">Chromosome</location>
    </subcellularLocation>
</comment>
<comment type="PTM">
    <text evidence="1">Can be acetylated to form H2BK6ac and H2BK33ac.</text>
</comment>
<comment type="PTM">
    <text evidence="1">Monoubiquitinated by BRE1 to form H2BK143ub1 and deubiquitinated by UBP26. Required for heterochromatic histone H3 di- and trimethylation at H3K4me. May give a specific tag for epigenetic transcriptional activation (By similarity).</text>
</comment>
<comment type="similarity">
    <text evidence="3">Belongs to the histone H2B family.</text>
</comment>
<comment type="caution">
    <text evidence="3">To ensure consistency between histone entries, we follow the 'Brno' nomenclature for histone modifications, with positions referring to those used in the literature for the 'closest' model organism. Due to slight variations in histone sequences between organisms and to the presence of initiator methionine in UniProtKB/Swiss-Prot sequences, the actual positions of modified amino acids in the sequence generally differ. In this entry the following conventions are used: H2BK6ac = acetylated Lys-7; H2BK33ac = acetylated Lys-37; H2BK143ub1 = monoubiquitinated Lys-149.</text>
</comment>
<gene>
    <name type="primary">H2B.10</name>
    <name type="ordered locus">Os01g0152300</name>
    <name type="ordered locus">LOC_Os01g05900</name>
    <name type="ORF">OsJ_000397</name>
    <name type="ORF">P0009G03.29</name>
    <name type="ORF">P0030H07.8</name>
</gene>